<sequence length="159" mass="17926">MKKELKKQIVEELSKEFTNEVCVFYADFKGQTVKDLEALRKAVREAEGKARIIKNTLARIAFANNGIEAEFEENNIFIWGEDQITLAKIITKHAAANKDTFKIKGAVIEGEVKDAAYVDEVSKLPTKDELLGMVAFMMKAPVAKFAWALNKLIEKKESE</sequence>
<comment type="function">
    <text evidence="1">Forms part of the ribosomal stalk, playing a central role in the interaction of the ribosome with GTP-bound translation factors.</text>
</comment>
<comment type="subunit">
    <text evidence="1">Part of the ribosomal stalk of the 50S ribosomal subunit. The N-terminus interacts with L11 and the large rRNA to form the base of the stalk. The C-terminus forms an elongated spine to which L12 dimers bind in a sequential fashion forming a multimeric L10(L12)X complex.</text>
</comment>
<comment type="similarity">
    <text evidence="1">Belongs to the universal ribosomal protein uL10 family.</text>
</comment>
<reference key="1">
    <citation type="journal article" date="2009" name="PLoS Genet.">
        <title>Adaptations to submarine hydrothermal environments exemplified by the genome of Nautilia profundicola.</title>
        <authorList>
            <person name="Campbell B.J."/>
            <person name="Smith J.L."/>
            <person name="Hanson T.E."/>
            <person name="Klotz M.G."/>
            <person name="Stein L.Y."/>
            <person name="Lee C.K."/>
            <person name="Wu D."/>
            <person name="Robinson J.M."/>
            <person name="Khouri H.M."/>
            <person name="Eisen J.A."/>
            <person name="Cary S.C."/>
        </authorList>
    </citation>
    <scope>NUCLEOTIDE SEQUENCE [LARGE SCALE GENOMIC DNA]</scope>
    <source>
        <strain>ATCC BAA-1463 / DSM 18972 / AmH</strain>
    </source>
</reference>
<proteinExistence type="inferred from homology"/>
<accession>B9L7J4</accession>
<protein>
    <recommendedName>
        <fullName evidence="1">Large ribosomal subunit protein uL10</fullName>
    </recommendedName>
    <alternativeName>
        <fullName evidence="2">50S ribosomal protein L10</fullName>
    </alternativeName>
</protein>
<keyword id="KW-0687">Ribonucleoprotein</keyword>
<keyword id="KW-0689">Ribosomal protein</keyword>
<keyword id="KW-0694">RNA-binding</keyword>
<keyword id="KW-0699">rRNA-binding</keyword>
<feature type="chain" id="PRO_1000195559" description="Large ribosomal subunit protein uL10">
    <location>
        <begin position="1"/>
        <end position="159"/>
    </location>
</feature>
<organism>
    <name type="scientific">Nautilia profundicola (strain ATCC BAA-1463 / DSM 18972 / AmH)</name>
    <dbReference type="NCBI Taxonomy" id="598659"/>
    <lineage>
        <taxon>Bacteria</taxon>
        <taxon>Pseudomonadati</taxon>
        <taxon>Campylobacterota</taxon>
        <taxon>Epsilonproteobacteria</taxon>
        <taxon>Nautiliales</taxon>
        <taxon>Nautiliaceae</taxon>
        <taxon>Nautilia</taxon>
    </lineage>
</organism>
<dbReference type="EMBL" id="CP001279">
    <property type="protein sequence ID" value="ACM93486.1"/>
    <property type="molecule type" value="Genomic_DNA"/>
</dbReference>
<dbReference type="RefSeq" id="WP_015902538.1">
    <property type="nucleotide sequence ID" value="NC_012115.1"/>
</dbReference>
<dbReference type="SMR" id="B9L7J4"/>
<dbReference type="STRING" id="598659.NAMH_0178"/>
<dbReference type="KEGG" id="nam:NAMH_0178"/>
<dbReference type="eggNOG" id="COG0244">
    <property type="taxonomic scope" value="Bacteria"/>
</dbReference>
<dbReference type="HOGENOM" id="CLU_092227_2_2_7"/>
<dbReference type="OrthoDB" id="3186107at2"/>
<dbReference type="Proteomes" id="UP000000448">
    <property type="component" value="Chromosome"/>
</dbReference>
<dbReference type="GO" id="GO:1990904">
    <property type="term" value="C:ribonucleoprotein complex"/>
    <property type="evidence" value="ECO:0007669"/>
    <property type="project" value="UniProtKB-KW"/>
</dbReference>
<dbReference type="GO" id="GO:0005840">
    <property type="term" value="C:ribosome"/>
    <property type="evidence" value="ECO:0007669"/>
    <property type="project" value="UniProtKB-KW"/>
</dbReference>
<dbReference type="GO" id="GO:0070180">
    <property type="term" value="F:large ribosomal subunit rRNA binding"/>
    <property type="evidence" value="ECO:0007669"/>
    <property type="project" value="UniProtKB-UniRule"/>
</dbReference>
<dbReference type="GO" id="GO:0006412">
    <property type="term" value="P:translation"/>
    <property type="evidence" value="ECO:0007669"/>
    <property type="project" value="UniProtKB-UniRule"/>
</dbReference>
<dbReference type="CDD" id="cd05797">
    <property type="entry name" value="Ribosomal_L10"/>
    <property type="match status" value="1"/>
</dbReference>
<dbReference type="Gene3D" id="3.30.70.1730">
    <property type="match status" value="1"/>
</dbReference>
<dbReference type="Gene3D" id="6.10.250.290">
    <property type="match status" value="1"/>
</dbReference>
<dbReference type="HAMAP" id="MF_00362">
    <property type="entry name" value="Ribosomal_uL10"/>
    <property type="match status" value="1"/>
</dbReference>
<dbReference type="InterPro" id="IPR001790">
    <property type="entry name" value="Ribosomal_uL10"/>
</dbReference>
<dbReference type="InterPro" id="IPR043141">
    <property type="entry name" value="Ribosomal_uL10-like_sf"/>
</dbReference>
<dbReference type="InterPro" id="IPR022973">
    <property type="entry name" value="Ribosomal_uL10_bac"/>
</dbReference>
<dbReference type="InterPro" id="IPR047865">
    <property type="entry name" value="Ribosomal_uL10_bac_type"/>
</dbReference>
<dbReference type="NCBIfam" id="NF000955">
    <property type="entry name" value="PRK00099.1-1"/>
    <property type="match status" value="1"/>
</dbReference>
<dbReference type="PANTHER" id="PTHR11560">
    <property type="entry name" value="39S RIBOSOMAL PROTEIN L10, MITOCHONDRIAL"/>
    <property type="match status" value="1"/>
</dbReference>
<dbReference type="Pfam" id="PF00466">
    <property type="entry name" value="Ribosomal_L10"/>
    <property type="match status" value="1"/>
</dbReference>
<dbReference type="SUPFAM" id="SSF160369">
    <property type="entry name" value="Ribosomal protein L10-like"/>
    <property type="match status" value="1"/>
</dbReference>
<name>RL10_NAUPA</name>
<evidence type="ECO:0000255" key="1">
    <source>
        <dbReference type="HAMAP-Rule" id="MF_00362"/>
    </source>
</evidence>
<evidence type="ECO:0000305" key="2"/>
<gene>
    <name evidence="1" type="primary">rplJ</name>
    <name type="ordered locus">NAMH_0178</name>
</gene>